<accession>P40862</accession>
<feature type="chain" id="PRO_0000050326" description="Proline/betaine transporter">
    <location>
        <begin position="1"/>
        <end position="500"/>
    </location>
</feature>
<feature type="topological domain" description="Cytoplasmic" evidence="2">
    <location>
        <begin position="1"/>
        <end position="37"/>
    </location>
</feature>
<feature type="transmembrane region" description="Helical; Name=1" evidence="2">
    <location>
        <begin position="38"/>
        <end position="58"/>
    </location>
</feature>
<feature type="topological domain" description="Periplasmic" evidence="2">
    <location>
        <begin position="59"/>
        <end position="65"/>
    </location>
</feature>
<feature type="transmembrane region" description="Helical; Name=2" evidence="2">
    <location>
        <begin position="66"/>
        <end position="86"/>
    </location>
</feature>
<feature type="topological domain" description="Cytoplasmic" evidence="2">
    <location>
        <begin position="87"/>
        <end position="97"/>
    </location>
</feature>
<feature type="transmembrane region" description="Helical; Name=3" evidence="2">
    <location>
        <begin position="98"/>
        <end position="118"/>
    </location>
</feature>
<feature type="topological domain" description="Periplasmic" evidence="2">
    <location>
        <begin position="119"/>
        <end position="121"/>
    </location>
</feature>
<feature type="transmembrane region" description="Helical; Name=4" evidence="2">
    <location>
        <begin position="122"/>
        <end position="142"/>
    </location>
</feature>
<feature type="topological domain" description="Cytoplasmic" evidence="2">
    <location>
        <begin position="143"/>
        <end position="169"/>
    </location>
</feature>
<feature type="transmembrane region" description="Helical; Name=5" evidence="2">
    <location>
        <begin position="170"/>
        <end position="190"/>
    </location>
</feature>
<feature type="topological domain" description="Periplasmic" evidence="2">
    <location>
        <begin position="191"/>
        <end position="194"/>
    </location>
</feature>
<feature type="transmembrane region" description="Helical; Name=6" evidence="2">
    <location>
        <begin position="195"/>
        <end position="215"/>
    </location>
</feature>
<feature type="topological domain" description="Cytoplasmic" evidence="2">
    <location>
        <begin position="216"/>
        <end position="260"/>
    </location>
</feature>
<feature type="transmembrane region" description="Helical; Name=7" evidence="2">
    <location>
        <begin position="261"/>
        <end position="281"/>
    </location>
</feature>
<feature type="topological domain" description="Periplasmic" evidence="2">
    <location>
        <begin position="282"/>
        <end position="297"/>
    </location>
</feature>
<feature type="transmembrane region" description="Helical; Name=8" evidence="2">
    <location>
        <begin position="298"/>
        <end position="318"/>
    </location>
</feature>
<feature type="topological domain" description="Cytoplasmic" evidence="2">
    <location>
        <begin position="319"/>
        <end position="325"/>
    </location>
</feature>
<feature type="transmembrane region" description="Helical; Name=9" evidence="2">
    <location>
        <begin position="326"/>
        <end position="346"/>
    </location>
</feature>
<feature type="topological domain" description="Periplasmic" evidence="2">
    <location>
        <begin position="347"/>
        <end position="350"/>
    </location>
</feature>
<feature type="transmembrane region" description="Helical; Name=10" evidence="2">
    <location>
        <begin position="351"/>
        <end position="371"/>
    </location>
</feature>
<feature type="topological domain" description="Cytoplasmic" evidence="2">
    <location>
        <begin position="372"/>
        <end position="390"/>
    </location>
</feature>
<feature type="transmembrane region" description="Helical; Name=11" evidence="2">
    <location>
        <begin position="391"/>
        <end position="411"/>
    </location>
</feature>
<feature type="topological domain" description="Periplasmic" evidence="2">
    <location>
        <begin position="412"/>
        <end position="416"/>
    </location>
</feature>
<feature type="transmembrane region" description="Helical; Name=12" evidence="2">
    <location>
        <begin position="417"/>
        <end position="437"/>
    </location>
</feature>
<feature type="topological domain" description="Cytoplasmic" evidence="2">
    <location>
        <begin position="438"/>
        <end position="500"/>
    </location>
</feature>
<feature type="coiled-coil region" evidence="2">
    <location>
        <begin position="453"/>
        <end position="498"/>
    </location>
</feature>
<organism>
    <name type="scientific">Salmonella typhimurium (strain LT2 / SGSC1412 / ATCC 700720)</name>
    <dbReference type="NCBI Taxonomy" id="99287"/>
    <lineage>
        <taxon>Bacteria</taxon>
        <taxon>Pseudomonadati</taxon>
        <taxon>Pseudomonadota</taxon>
        <taxon>Gammaproteobacteria</taxon>
        <taxon>Enterobacterales</taxon>
        <taxon>Enterobacteriaceae</taxon>
        <taxon>Salmonella</taxon>
    </lineage>
</organism>
<gene>
    <name type="primary">proP</name>
    <name type="ordered locus">STM4290</name>
</gene>
<comment type="function">
    <text evidence="1">Proton symporter that senses osmotic shifts and responds by importing osmolytes such as proline, glycine betaine, stachydrine, pipecolic acid, ectoine and taurine. It is both an osmosensor and an osmoregulator which is available to participate early in the bacterial osmoregulatory response (By similarity).</text>
</comment>
<comment type="subcellular location">
    <subcellularLocation>
        <location>Cell inner membrane</location>
        <topology>Multi-pass membrane protein</topology>
    </subcellularLocation>
</comment>
<comment type="similarity">
    <text evidence="3">Belongs to the major facilitator superfamily. Metabolite:H+ Symporter (MHS) family (TC 2.A.1.6) family.</text>
</comment>
<protein>
    <recommendedName>
        <fullName>Proline/betaine transporter</fullName>
    </recommendedName>
    <alternativeName>
        <fullName>Proline porter II</fullName>
        <shortName>PPII</shortName>
    </alternativeName>
</protein>
<keyword id="KW-0997">Cell inner membrane</keyword>
<keyword id="KW-1003">Cell membrane</keyword>
<keyword id="KW-0175">Coiled coil</keyword>
<keyword id="KW-0472">Membrane</keyword>
<keyword id="KW-1185">Reference proteome</keyword>
<keyword id="KW-0769">Symport</keyword>
<keyword id="KW-0812">Transmembrane</keyword>
<keyword id="KW-1133">Transmembrane helix</keyword>
<keyword id="KW-0813">Transport</keyword>
<name>PROP_SALTY</name>
<proteinExistence type="inferred from homology"/>
<dbReference type="EMBL" id="AE006468">
    <property type="protein sequence ID" value="AAL23114.1"/>
    <property type="molecule type" value="Genomic_DNA"/>
</dbReference>
<dbReference type="EMBL" id="L13395">
    <property type="status" value="NOT_ANNOTATED_CDS"/>
    <property type="molecule type" value="Genomic_DNA"/>
</dbReference>
<dbReference type="RefSeq" id="NP_463155.1">
    <property type="nucleotide sequence ID" value="NC_003197.2"/>
</dbReference>
<dbReference type="RefSeq" id="WP_000919710.1">
    <property type="nucleotide sequence ID" value="NC_003197.2"/>
</dbReference>
<dbReference type="SMR" id="P40862"/>
<dbReference type="STRING" id="99287.STM4290"/>
<dbReference type="PaxDb" id="99287-STM4290"/>
<dbReference type="GeneID" id="1255816"/>
<dbReference type="KEGG" id="stm:STM4290"/>
<dbReference type="PATRIC" id="fig|99287.12.peg.4512"/>
<dbReference type="HOGENOM" id="CLU_001265_39_0_6"/>
<dbReference type="OMA" id="GYYVVFT"/>
<dbReference type="PhylomeDB" id="P40862"/>
<dbReference type="BioCyc" id="SENT99287:STM4290-MONOMER"/>
<dbReference type="Proteomes" id="UP000001014">
    <property type="component" value="Chromosome"/>
</dbReference>
<dbReference type="GO" id="GO:0005886">
    <property type="term" value="C:plasma membrane"/>
    <property type="evidence" value="ECO:0007669"/>
    <property type="project" value="UniProtKB-SubCell"/>
</dbReference>
<dbReference type="GO" id="GO:0015293">
    <property type="term" value="F:symporter activity"/>
    <property type="evidence" value="ECO:0007669"/>
    <property type="project" value="UniProtKB-KW"/>
</dbReference>
<dbReference type="CDD" id="cd17366">
    <property type="entry name" value="MFS_ProP"/>
    <property type="match status" value="1"/>
</dbReference>
<dbReference type="FunFam" id="1.20.1250.20:FF:000001">
    <property type="entry name" value="Dicarboxylate MFS transporter"/>
    <property type="match status" value="1"/>
</dbReference>
<dbReference type="FunFam" id="1.20.1250.20:FF:000051">
    <property type="entry name" value="Proline/glycine betaine transporter"/>
    <property type="match status" value="1"/>
</dbReference>
<dbReference type="Gene3D" id="1.20.1250.20">
    <property type="entry name" value="MFS general substrate transporter like domains"/>
    <property type="match status" value="2"/>
</dbReference>
<dbReference type="InterPro" id="IPR051084">
    <property type="entry name" value="H+-coupled_symporters"/>
</dbReference>
<dbReference type="InterPro" id="IPR020846">
    <property type="entry name" value="MFS_dom"/>
</dbReference>
<dbReference type="InterPro" id="IPR005828">
    <property type="entry name" value="MFS_sugar_transport-like"/>
</dbReference>
<dbReference type="InterPro" id="IPR036259">
    <property type="entry name" value="MFS_trans_sf"/>
</dbReference>
<dbReference type="InterPro" id="IPR004736">
    <property type="entry name" value="MHS_symport"/>
</dbReference>
<dbReference type="InterPro" id="IPR015041">
    <property type="entry name" value="Osmo_CC"/>
</dbReference>
<dbReference type="InterPro" id="IPR036292">
    <property type="entry name" value="ProP_C"/>
</dbReference>
<dbReference type="InterPro" id="IPR005829">
    <property type="entry name" value="Sugar_transporter_CS"/>
</dbReference>
<dbReference type="NCBIfam" id="TIGR00883">
    <property type="entry name" value="2A0106"/>
    <property type="match status" value="1"/>
</dbReference>
<dbReference type="NCBIfam" id="NF007927">
    <property type="entry name" value="PRK10642.1"/>
    <property type="match status" value="1"/>
</dbReference>
<dbReference type="PANTHER" id="PTHR43528">
    <property type="entry name" value="ALPHA-KETOGLUTARATE PERMEASE"/>
    <property type="match status" value="1"/>
</dbReference>
<dbReference type="PANTHER" id="PTHR43528:SF5">
    <property type="entry name" value="PROLINE_BETAINE TRANSPORTER"/>
    <property type="match status" value="1"/>
</dbReference>
<dbReference type="Pfam" id="PF08946">
    <property type="entry name" value="Osmo_CC"/>
    <property type="match status" value="1"/>
</dbReference>
<dbReference type="Pfam" id="PF00083">
    <property type="entry name" value="Sugar_tr"/>
    <property type="match status" value="1"/>
</dbReference>
<dbReference type="SUPFAM" id="SSF103473">
    <property type="entry name" value="MFS general substrate transporter"/>
    <property type="match status" value="1"/>
</dbReference>
<dbReference type="SUPFAM" id="SSF103661">
    <property type="entry name" value="Proline/betaine transporter ProP, C-terminal cytoplasmic domain"/>
    <property type="match status" value="1"/>
</dbReference>
<dbReference type="PROSITE" id="PS50850">
    <property type="entry name" value="MFS"/>
    <property type="match status" value="1"/>
</dbReference>
<dbReference type="PROSITE" id="PS00216">
    <property type="entry name" value="SUGAR_TRANSPORT_1"/>
    <property type="match status" value="1"/>
</dbReference>
<reference key="1">
    <citation type="journal article" date="2001" name="Nature">
        <title>Complete genome sequence of Salmonella enterica serovar Typhimurium LT2.</title>
        <authorList>
            <person name="McClelland M."/>
            <person name="Sanderson K.E."/>
            <person name="Spieth J."/>
            <person name="Clifton S.W."/>
            <person name="Latreille P."/>
            <person name="Courtney L."/>
            <person name="Porwollik S."/>
            <person name="Ali J."/>
            <person name="Dante M."/>
            <person name="Du F."/>
            <person name="Hou S."/>
            <person name="Layman D."/>
            <person name="Leonard S."/>
            <person name="Nguyen C."/>
            <person name="Scott K."/>
            <person name="Holmes A."/>
            <person name="Grewal N."/>
            <person name="Mulvaney E."/>
            <person name="Ryan E."/>
            <person name="Sun H."/>
            <person name="Florea L."/>
            <person name="Miller W."/>
            <person name="Stoneking T."/>
            <person name="Nhan M."/>
            <person name="Waterston R."/>
            <person name="Wilson R.K."/>
        </authorList>
    </citation>
    <scope>NUCLEOTIDE SEQUENCE [LARGE SCALE GENOMIC DNA]</scope>
    <source>
        <strain>LT2 / SGSC1412 / ATCC 700720</strain>
    </source>
</reference>
<reference key="2">
    <citation type="journal article" date="1993" name="J. Bacteriol.">
        <title>Spontaneous pmrA mutants of Salmonella typhimurium LT2 define a new two-component regulatory system with a possible role in virulence.</title>
        <authorList>
            <person name="Roland K.L."/>
            <person name="Martin L.E."/>
            <person name="Esther C.R."/>
            <person name="Spitznagel J.K."/>
        </authorList>
    </citation>
    <scope>NUCLEOTIDE SEQUENCE [GENOMIC DNA] OF 484-500</scope>
    <source>
        <strain>LT2</strain>
    </source>
</reference>
<evidence type="ECO:0000250" key="1"/>
<evidence type="ECO:0000255" key="2"/>
<evidence type="ECO:0000305" key="3"/>
<sequence length="500" mass="54787">MLKRKKIKPITLGDVTIIDDGKLRKAITAASLGNAMEWFDFGVYGFVAYALGKVFFPGADPSVQMIAALATFSVPFLIRPLGGLFFGMLGDKYGRQKILAITIVIMSISTFCIGLIPSYATIGIWAPILLLLCKMAQGFSVGGEYTGASIFVAEYSPDRKRGFMGSWLDFGSIAGFVLGAGVVVLISTIVGEENFLEWGWRIPFFIALPLGIIGLYLRHALEETPAFQQHVDKLEQGDREGLQDGPKVSFKEIATKHWRSLLSCIGLVIATNVTYYMLLTYMPSYLSHNLHYSEDHGVLIIIAIMIGMLFVQPVMGLLSDRFGRRPFVIMGSIALFALAIPAFILINSNVIGLIFAGLLMLAVILNCFTGVMASTLPAMFPTHIRYSALAAAFNISVLIAGLTPTLAAWLVESSQDLMMPAYYLMVIAVIGLITGISMKETANRPLKGATPAASDIQEAKEILGEHYDNIEQKIDDIDQEIAELQVKRSRLVQQHPRIDE</sequence>